<name>RPOC_PSECP</name>
<organism>
    <name type="scientific">Pseudarthrobacter chlorophenolicus (strain ATCC 700700 / DSM 12829 / CIP 107037 / JCM 12360 / KCTC 9906 / NCIMB 13794 / A6)</name>
    <name type="common">Arthrobacter chlorophenolicus</name>
    <dbReference type="NCBI Taxonomy" id="452863"/>
    <lineage>
        <taxon>Bacteria</taxon>
        <taxon>Bacillati</taxon>
        <taxon>Actinomycetota</taxon>
        <taxon>Actinomycetes</taxon>
        <taxon>Micrococcales</taxon>
        <taxon>Micrococcaceae</taxon>
        <taxon>Pseudarthrobacter</taxon>
    </lineage>
</organism>
<accession>B8HD15</accession>
<evidence type="ECO:0000255" key="1">
    <source>
        <dbReference type="HAMAP-Rule" id="MF_01322"/>
    </source>
</evidence>
<sequence>MSSESSFGLMQIGLATAEDIRGWSYGEVKKPETINYRTLKPEKDGLFCEKIFGPSRDWECYCGKYKRVRFKGIICERCGVEVTRAKVRRERMGHIELAAPVTHIWYFKGVPSRLGYLLDLAPKDLEKVIYFAAYMITSVDEAARHEELPNLQVEHDIEKKQLIDNRDGDIAAIARDLEGEIARLEGEGAKAADKKKARDSADRQMANVRKRADADIERLEQVWDRFKNLKVADLEGDEGLYRELRDRYGMYFEGSMGAEAIKKRLEGFDMQAESDLLRDIIANGKGQRKTRALKRLKVVNAFLTTNNSPLGMVLDAVPVIPPELRPMVQLDGGRFATSDLNDLYRRVINRNNRLKRLLDLGAPEIIVNNEKRMLQEAVDSLFDNGRRGRPVTGPGNRPLKSLSDMLKGKQGRFRQNLLGKRVDYSGRSVIVVGPQLKLHQCGLPKQMALELFKPFVMKRLVDLNHAQNIKSAKRMVERYRPQVWDVLEEIITEHPVLLNRAPTLHRLGIQAFEPQLVEGKAIQLHPLVCGAFNADFDGDQMAVHLPLSPEAQAEARILMLSSNNILKPSDGRPVTLPSQDMIIGLYHLTTKRKGSAGEGRIFGSVSEAIMAFDARDLHLNSQVKIRLEGFVPYSGWEAPEGWEQGQPAIVETSLGQVLFNETLPADYPWVEAVADKGELSRIVNDLAERYPKVVTAATLDNLKDAGFYWATRSGVTVAISDIEVPAAKPEILAGYEERAAKIQGQYDKGLIDDDERRQELIEIWNKATNDIAAVMRESLSPMNTINRMVSSGARGNWMQVRQIAGIRGLVANPKGEIIPRPIKSSYREGLSVLEYFIATHGARKGLADTALRTANSGYLTRRLVDVSQDVIVREEDCGTERGLVTPIAVADSNGELVLDENVENSAYARTLAVDVVDSEGNVLAAAGTDCGDVVIDELFKAGITEVKVRSVLTCESSVGTCALCYGRSLATGKTVDIGEAVGIIAAQSIGEPGTQLTMRTFHTGGAVSAGGGDDITQGLPRIQELFEARTPKGVAPIAEAAGRITIEESERQMRLVITPDDGTEEIAYPVLRRSRLLIEDGDHVTVGQKLINGPVDPKQVLRIMGPRAAQKFLVDEVQGVYRSQGIGIHDKHVEVIVRQMLRRVTVIESGESDLLPGELAERSRFEDANRRVVSEGKAPASGRPELMGITKASLATESWLSAASFQETTRVLTQAAMEGKSDPLLGLKENVIIGKLIPAGTGLPRYTEVTVEPTEEAKANLFTGPSAFSDFSYDTLGGDGAPEFHAIPLDDYDLGNDFR</sequence>
<proteinExistence type="inferred from homology"/>
<gene>
    <name evidence="1" type="primary">rpoC</name>
    <name type="ordered locus">Achl_2696</name>
</gene>
<dbReference type="EC" id="2.7.7.6" evidence="1"/>
<dbReference type="EMBL" id="CP001341">
    <property type="protein sequence ID" value="ACL40661.1"/>
    <property type="molecule type" value="Genomic_DNA"/>
</dbReference>
<dbReference type="RefSeq" id="WP_015937858.1">
    <property type="nucleotide sequence ID" value="NC_011886.1"/>
</dbReference>
<dbReference type="SMR" id="B8HD15"/>
<dbReference type="STRING" id="452863.Achl_2696"/>
<dbReference type="KEGG" id="ach:Achl_2696"/>
<dbReference type="eggNOG" id="COG0086">
    <property type="taxonomic scope" value="Bacteria"/>
</dbReference>
<dbReference type="HOGENOM" id="CLU_000524_3_1_11"/>
<dbReference type="OrthoDB" id="9815296at2"/>
<dbReference type="Proteomes" id="UP000002505">
    <property type="component" value="Chromosome"/>
</dbReference>
<dbReference type="GO" id="GO:0000428">
    <property type="term" value="C:DNA-directed RNA polymerase complex"/>
    <property type="evidence" value="ECO:0007669"/>
    <property type="project" value="UniProtKB-KW"/>
</dbReference>
<dbReference type="GO" id="GO:0003677">
    <property type="term" value="F:DNA binding"/>
    <property type="evidence" value="ECO:0007669"/>
    <property type="project" value="UniProtKB-UniRule"/>
</dbReference>
<dbReference type="GO" id="GO:0003899">
    <property type="term" value="F:DNA-directed RNA polymerase activity"/>
    <property type="evidence" value="ECO:0007669"/>
    <property type="project" value="UniProtKB-UniRule"/>
</dbReference>
<dbReference type="GO" id="GO:0000287">
    <property type="term" value="F:magnesium ion binding"/>
    <property type="evidence" value="ECO:0007669"/>
    <property type="project" value="UniProtKB-UniRule"/>
</dbReference>
<dbReference type="GO" id="GO:0008270">
    <property type="term" value="F:zinc ion binding"/>
    <property type="evidence" value="ECO:0007669"/>
    <property type="project" value="UniProtKB-UniRule"/>
</dbReference>
<dbReference type="GO" id="GO:0006351">
    <property type="term" value="P:DNA-templated transcription"/>
    <property type="evidence" value="ECO:0007669"/>
    <property type="project" value="UniProtKB-UniRule"/>
</dbReference>
<dbReference type="CDD" id="cd02655">
    <property type="entry name" value="RNAP_beta'_C"/>
    <property type="match status" value="1"/>
</dbReference>
<dbReference type="CDD" id="cd01609">
    <property type="entry name" value="RNAP_beta'_N"/>
    <property type="match status" value="1"/>
</dbReference>
<dbReference type="FunFam" id="1.10.150.390:FF:000002">
    <property type="entry name" value="DNA-directed RNA polymerase subunit beta"/>
    <property type="match status" value="1"/>
</dbReference>
<dbReference type="FunFam" id="1.10.40.90:FF:000001">
    <property type="entry name" value="DNA-directed RNA polymerase subunit beta"/>
    <property type="match status" value="1"/>
</dbReference>
<dbReference type="FunFam" id="4.10.860.120:FF:000001">
    <property type="entry name" value="DNA-directed RNA polymerase subunit beta"/>
    <property type="match status" value="1"/>
</dbReference>
<dbReference type="Gene3D" id="1.10.132.30">
    <property type="match status" value="1"/>
</dbReference>
<dbReference type="Gene3D" id="1.10.150.390">
    <property type="match status" value="1"/>
</dbReference>
<dbReference type="Gene3D" id="1.10.1790.20">
    <property type="match status" value="1"/>
</dbReference>
<dbReference type="Gene3D" id="1.10.40.90">
    <property type="match status" value="1"/>
</dbReference>
<dbReference type="Gene3D" id="2.40.40.20">
    <property type="match status" value="1"/>
</dbReference>
<dbReference type="Gene3D" id="2.40.50.100">
    <property type="match status" value="1"/>
</dbReference>
<dbReference type="Gene3D" id="4.10.860.120">
    <property type="entry name" value="RNA polymerase II, clamp domain"/>
    <property type="match status" value="1"/>
</dbReference>
<dbReference type="Gene3D" id="1.10.274.100">
    <property type="entry name" value="RNA polymerase Rpb1, domain 3"/>
    <property type="match status" value="1"/>
</dbReference>
<dbReference type="HAMAP" id="MF_01322">
    <property type="entry name" value="RNApol_bact_RpoC"/>
    <property type="match status" value="1"/>
</dbReference>
<dbReference type="InterPro" id="IPR045867">
    <property type="entry name" value="DNA-dir_RpoC_beta_prime"/>
</dbReference>
<dbReference type="InterPro" id="IPR012754">
    <property type="entry name" value="DNA-dir_RpoC_beta_prime_bact"/>
</dbReference>
<dbReference type="InterPro" id="IPR000722">
    <property type="entry name" value="RNA_pol_asu"/>
</dbReference>
<dbReference type="InterPro" id="IPR006592">
    <property type="entry name" value="RNA_pol_N"/>
</dbReference>
<dbReference type="InterPro" id="IPR007080">
    <property type="entry name" value="RNA_pol_Rpb1_1"/>
</dbReference>
<dbReference type="InterPro" id="IPR007066">
    <property type="entry name" value="RNA_pol_Rpb1_3"/>
</dbReference>
<dbReference type="InterPro" id="IPR042102">
    <property type="entry name" value="RNA_pol_Rpb1_3_sf"/>
</dbReference>
<dbReference type="InterPro" id="IPR007083">
    <property type="entry name" value="RNA_pol_Rpb1_4"/>
</dbReference>
<dbReference type="InterPro" id="IPR007081">
    <property type="entry name" value="RNA_pol_Rpb1_5"/>
</dbReference>
<dbReference type="InterPro" id="IPR044893">
    <property type="entry name" value="RNA_pol_Rpb1_clamp_domain"/>
</dbReference>
<dbReference type="InterPro" id="IPR038120">
    <property type="entry name" value="Rpb1_funnel_sf"/>
</dbReference>
<dbReference type="NCBIfam" id="NF011498">
    <property type="entry name" value="PRK14906.1"/>
    <property type="match status" value="1"/>
</dbReference>
<dbReference type="NCBIfam" id="TIGR02386">
    <property type="entry name" value="rpoC_TIGR"/>
    <property type="match status" value="1"/>
</dbReference>
<dbReference type="PANTHER" id="PTHR19376">
    <property type="entry name" value="DNA-DIRECTED RNA POLYMERASE"/>
    <property type="match status" value="1"/>
</dbReference>
<dbReference type="PANTHER" id="PTHR19376:SF54">
    <property type="entry name" value="DNA-DIRECTED RNA POLYMERASE SUBUNIT BETA"/>
    <property type="match status" value="1"/>
</dbReference>
<dbReference type="Pfam" id="PF04997">
    <property type="entry name" value="RNA_pol_Rpb1_1"/>
    <property type="match status" value="1"/>
</dbReference>
<dbReference type="Pfam" id="PF00623">
    <property type="entry name" value="RNA_pol_Rpb1_2"/>
    <property type="match status" value="1"/>
</dbReference>
<dbReference type="Pfam" id="PF04983">
    <property type="entry name" value="RNA_pol_Rpb1_3"/>
    <property type="match status" value="1"/>
</dbReference>
<dbReference type="Pfam" id="PF05000">
    <property type="entry name" value="RNA_pol_Rpb1_4"/>
    <property type="match status" value="1"/>
</dbReference>
<dbReference type="Pfam" id="PF04998">
    <property type="entry name" value="RNA_pol_Rpb1_5"/>
    <property type="match status" value="1"/>
</dbReference>
<dbReference type="SMART" id="SM00663">
    <property type="entry name" value="RPOLA_N"/>
    <property type="match status" value="1"/>
</dbReference>
<dbReference type="SUPFAM" id="SSF64484">
    <property type="entry name" value="beta and beta-prime subunits of DNA dependent RNA-polymerase"/>
    <property type="match status" value="1"/>
</dbReference>
<protein>
    <recommendedName>
        <fullName evidence="1">DNA-directed RNA polymerase subunit beta'</fullName>
        <shortName evidence="1">RNAP subunit beta'</shortName>
        <ecNumber evidence="1">2.7.7.6</ecNumber>
    </recommendedName>
    <alternativeName>
        <fullName evidence="1">RNA polymerase subunit beta'</fullName>
    </alternativeName>
    <alternativeName>
        <fullName evidence="1">Transcriptase subunit beta'</fullName>
    </alternativeName>
</protein>
<keyword id="KW-0240">DNA-directed RNA polymerase</keyword>
<keyword id="KW-0460">Magnesium</keyword>
<keyword id="KW-0479">Metal-binding</keyword>
<keyword id="KW-0548">Nucleotidyltransferase</keyword>
<keyword id="KW-0804">Transcription</keyword>
<keyword id="KW-0808">Transferase</keyword>
<keyword id="KW-0862">Zinc</keyword>
<comment type="function">
    <text evidence="1">DNA-dependent RNA polymerase catalyzes the transcription of DNA into RNA using the four ribonucleoside triphosphates as substrates.</text>
</comment>
<comment type="catalytic activity">
    <reaction evidence="1">
        <text>RNA(n) + a ribonucleoside 5'-triphosphate = RNA(n+1) + diphosphate</text>
        <dbReference type="Rhea" id="RHEA:21248"/>
        <dbReference type="Rhea" id="RHEA-COMP:14527"/>
        <dbReference type="Rhea" id="RHEA-COMP:17342"/>
        <dbReference type="ChEBI" id="CHEBI:33019"/>
        <dbReference type="ChEBI" id="CHEBI:61557"/>
        <dbReference type="ChEBI" id="CHEBI:140395"/>
        <dbReference type="EC" id="2.7.7.6"/>
    </reaction>
</comment>
<comment type="cofactor">
    <cofactor evidence="1">
        <name>Mg(2+)</name>
        <dbReference type="ChEBI" id="CHEBI:18420"/>
    </cofactor>
    <text evidence="1">Binds 1 Mg(2+) ion per subunit.</text>
</comment>
<comment type="cofactor">
    <cofactor evidence="1">
        <name>Zn(2+)</name>
        <dbReference type="ChEBI" id="CHEBI:29105"/>
    </cofactor>
    <text evidence="1">Binds 2 Zn(2+) ions per subunit.</text>
</comment>
<comment type="subunit">
    <text evidence="1">The RNAP catalytic core consists of 2 alpha, 1 beta, 1 beta' and 1 omega subunit. When a sigma factor is associated with the core the holoenzyme is formed, which can initiate transcription.</text>
</comment>
<comment type="similarity">
    <text evidence="1">Belongs to the RNA polymerase beta' chain family.</text>
</comment>
<feature type="chain" id="PRO_1000165834" description="DNA-directed RNA polymerase subunit beta'">
    <location>
        <begin position="1"/>
        <end position="1299"/>
    </location>
</feature>
<feature type="binding site" evidence="1">
    <location>
        <position position="60"/>
    </location>
    <ligand>
        <name>Zn(2+)</name>
        <dbReference type="ChEBI" id="CHEBI:29105"/>
        <label>1</label>
    </ligand>
</feature>
<feature type="binding site" evidence="1">
    <location>
        <position position="62"/>
    </location>
    <ligand>
        <name>Zn(2+)</name>
        <dbReference type="ChEBI" id="CHEBI:29105"/>
        <label>1</label>
    </ligand>
</feature>
<feature type="binding site" evidence="1">
    <location>
        <position position="75"/>
    </location>
    <ligand>
        <name>Zn(2+)</name>
        <dbReference type="ChEBI" id="CHEBI:29105"/>
        <label>1</label>
    </ligand>
</feature>
<feature type="binding site" evidence="1">
    <location>
        <position position="78"/>
    </location>
    <ligand>
        <name>Zn(2+)</name>
        <dbReference type="ChEBI" id="CHEBI:29105"/>
        <label>1</label>
    </ligand>
</feature>
<feature type="binding site" evidence="1">
    <location>
        <position position="535"/>
    </location>
    <ligand>
        <name>Mg(2+)</name>
        <dbReference type="ChEBI" id="CHEBI:18420"/>
    </ligand>
</feature>
<feature type="binding site" evidence="1">
    <location>
        <position position="537"/>
    </location>
    <ligand>
        <name>Mg(2+)</name>
        <dbReference type="ChEBI" id="CHEBI:18420"/>
    </ligand>
</feature>
<feature type="binding site" evidence="1">
    <location>
        <position position="539"/>
    </location>
    <ligand>
        <name>Mg(2+)</name>
        <dbReference type="ChEBI" id="CHEBI:18420"/>
    </ligand>
</feature>
<feature type="binding site" evidence="1">
    <location>
        <position position="877"/>
    </location>
    <ligand>
        <name>Zn(2+)</name>
        <dbReference type="ChEBI" id="CHEBI:29105"/>
        <label>2</label>
    </ligand>
</feature>
<feature type="binding site" evidence="1">
    <location>
        <position position="954"/>
    </location>
    <ligand>
        <name>Zn(2+)</name>
        <dbReference type="ChEBI" id="CHEBI:29105"/>
        <label>2</label>
    </ligand>
</feature>
<feature type="binding site" evidence="1">
    <location>
        <position position="961"/>
    </location>
    <ligand>
        <name>Zn(2+)</name>
        <dbReference type="ChEBI" id="CHEBI:29105"/>
        <label>2</label>
    </ligand>
</feature>
<feature type="binding site" evidence="1">
    <location>
        <position position="964"/>
    </location>
    <ligand>
        <name>Zn(2+)</name>
        <dbReference type="ChEBI" id="CHEBI:29105"/>
        <label>2</label>
    </ligand>
</feature>
<reference key="1">
    <citation type="submission" date="2009-01" db="EMBL/GenBank/DDBJ databases">
        <title>Complete sequence of chromosome of Arthrobacter chlorophenolicus A6.</title>
        <authorList>
            <consortium name="US DOE Joint Genome Institute"/>
            <person name="Lucas S."/>
            <person name="Copeland A."/>
            <person name="Lapidus A."/>
            <person name="Glavina del Rio T."/>
            <person name="Tice H."/>
            <person name="Bruce D."/>
            <person name="Goodwin L."/>
            <person name="Pitluck S."/>
            <person name="Goltsman E."/>
            <person name="Clum A."/>
            <person name="Larimer F."/>
            <person name="Land M."/>
            <person name="Hauser L."/>
            <person name="Kyrpides N."/>
            <person name="Mikhailova N."/>
            <person name="Jansson J."/>
            <person name="Richardson P."/>
        </authorList>
    </citation>
    <scope>NUCLEOTIDE SEQUENCE [LARGE SCALE GENOMIC DNA]</scope>
    <source>
        <strain>ATCC 700700 / DSM 12829 / CIP 107037 / JCM 12360 / KCTC 9906 / NCIMB 13794 / A6</strain>
    </source>
</reference>